<gene>
    <name type="primary">DEFB1</name>
</gene>
<feature type="signal peptide" evidence="3">
    <location>
        <begin position="1"/>
        <end position="21"/>
    </location>
</feature>
<feature type="propeptide" id="PRO_0000006909" evidence="1">
    <location>
        <begin position="22"/>
        <end position="32"/>
    </location>
</feature>
<feature type="peptide" id="PRO_0000006910" description="Beta-defensin 1">
    <location>
        <begin position="33"/>
        <end position="68"/>
    </location>
</feature>
<feature type="disulfide bond" evidence="1">
    <location>
        <begin position="37"/>
        <end position="66"/>
    </location>
</feature>
<feature type="disulfide bond" evidence="1">
    <location>
        <begin position="44"/>
        <end position="59"/>
    </location>
</feature>
<feature type="disulfide bond" evidence="1">
    <location>
        <begin position="49"/>
        <end position="67"/>
    </location>
</feature>
<dbReference type="EMBL" id="AF014016">
    <property type="protein sequence ID" value="AAB66344.1"/>
    <property type="molecule type" value="mRNA"/>
</dbReference>
<dbReference type="EMBL" id="AF288285">
    <property type="protein sequence ID" value="AAK26258.1"/>
    <property type="molecule type" value="mRNA"/>
</dbReference>
<dbReference type="RefSeq" id="NP_001028029.1">
    <property type="nucleotide sequence ID" value="NM_001032857.1"/>
</dbReference>
<dbReference type="SMR" id="O18794"/>
<dbReference type="FunCoup" id="O18794">
    <property type="interactions" value="59"/>
</dbReference>
<dbReference type="STRING" id="9544.ENSMMUP00000077550"/>
<dbReference type="PaxDb" id="9544-ENSMMUP00000005058"/>
<dbReference type="Ensembl" id="ENSMMUT00000086565.1">
    <property type="protein sequence ID" value="ENSMMUP00000077550.1"/>
    <property type="gene ID" value="ENSMMUG00000053229.1"/>
</dbReference>
<dbReference type="GeneID" id="574187"/>
<dbReference type="KEGG" id="mcc:574187"/>
<dbReference type="CTD" id="1672"/>
<dbReference type="VEuPathDB" id="HostDB:ENSMMUG00000053229"/>
<dbReference type="eggNOG" id="ENOG502TDMV">
    <property type="taxonomic scope" value="Eukaryota"/>
</dbReference>
<dbReference type="GeneTree" id="ENSGT00390000017014"/>
<dbReference type="HOGENOM" id="CLU_189296_1_0_1"/>
<dbReference type="InParanoid" id="O18794"/>
<dbReference type="OMA" id="SGKAKCC"/>
<dbReference type="OrthoDB" id="9622366at2759"/>
<dbReference type="Proteomes" id="UP000006718">
    <property type="component" value="Chromosome 8"/>
</dbReference>
<dbReference type="Bgee" id="ENSMMUG00000053229">
    <property type="expression patterns" value="Expressed in kidney and 17 other cell types or tissues"/>
</dbReference>
<dbReference type="ExpressionAtlas" id="O18794">
    <property type="expression patterns" value="baseline"/>
</dbReference>
<dbReference type="GO" id="GO:0005615">
    <property type="term" value="C:extracellular space"/>
    <property type="evidence" value="ECO:0000318"/>
    <property type="project" value="GO_Central"/>
</dbReference>
<dbReference type="GO" id="GO:0016020">
    <property type="term" value="C:membrane"/>
    <property type="evidence" value="ECO:0000250"/>
    <property type="project" value="UniProtKB"/>
</dbReference>
<dbReference type="GO" id="GO:1990742">
    <property type="term" value="C:microvesicle"/>
    <property type="evidence" value="ECO:0000250"/>
    <property type="project" value="UniProtKB"/>
</dbReference>
<dbReference type="GO" id="GO:0097225">
    <property type="term" value="C:sperm midpiece"/>
    <property type="evidence" value="ECO:0000250"/>
    <property type="project" value="UniProtKB"/>
</dbReference>
<dbReference type="GO" id="GO:0031731">
    <property type="term" value="F:CCR6 chemokine receptor binding"/>
    <property type="evidence" value="ECO:0000250"/>
    <property type="project" value="UniProtKB"/>
</dbReference>
<dbReference type="GO" id="GO:0042802">
    <property type="term" value="F:identical protein binding"/>
    <property type="evidence" value="ECO:0000250"/>
    <property type="project" value="UniProtKB"/>
</dbReference>
<dbReference type="GO" id="GO:0019731">
    <property type="term" value="P:antibacterial humoral response"/>
    <property type="evidence" value="ECO:0007669"/>
    <property type="project" value="Ensembl"/>
</dbReference>
<dbReference type="GO" id="GO:0061844">
    <property type="term" value="P:antimicrobial humoral immune response mediated by antimicrobial peptide"/>
    <property type="evidence" value="ECO:0007669"/>
    <property type="project" value="Ensembl"/>
</dbReference>
<dbReference type="GO" id="GO:0019722">
    <property type="term" value="P:calcium-mediated signaling"/>
    <property type="evidence" value="ECO:0000250"/>
    <property type="project" value="UniProtKB"/>
</dbReference>
<dbReference type="GO" id="GO:0050829">
    <property type="term" value="P:defense response to Gram-negative bacterium"/>
    <property type="evidence" value="ECO:0000250"/>
    <property type="project" value="UniProtKB"/>
</dbReference>
<dbReference type="GO" id="GO:0050830">
    <property type="term" value="P:defense response to Gram-positive bacterium"/>
    <property type="evidence" value="ECO:0000250"/>
    <property type="project" value="UniProtKB"/>
</dbReference>
<dbReference type="GO" id="GO:0002227">
    <property type="term" value="P:innate immune response in mucosa"/>
    <property type="evidence" value="ECO:0000318"/>
    <property type="project" value="GO_Central"/>
</dbReference>
<dbReference type="GO" id="GO:0060474">
    <property type="term" value="P:positive regulation of flagellated sperm motility involved in capacitation"/>
    <property type="evidence" value="ECO:0000250"/>
    <property type="project" value="UniProtKB"/>
</dbReference>
<dbReference type="FunFam" id="3.10.360.10:FF:000001">
    <property type="entry name" value="Beta-defensin 1"/>
    <property type="match status" value="1"/>
</dbReference>
<dbReference type="Gene3D" id="3.10.360.10">
    <property type="entry name" value="Antimicrobial Peptide, Beta-defensin 2, Chain A"/>
    <property type="match status" value="1"/>
</dbReference>
<dbReference type="InterPro" id="IPR001855">
    <property type="entry name" value="Defensin_beta-like"/>
</dbReference>
<dbReference type="PANTHER" id="PTHR21388:SF9">
    <property type="entry name" value="BETA-DEFENSIN 1"/>
    <property type="match status" value="1"/>
</dbReference>
<dbReference type="PANTHER" id="PTHR21388">
    <property type="entry name" value="BETA-DEFENSIN-RELATED"/>
    <property type="match status" value="1"/>
</dbReference>
<dbReference type="Pfam" id="PF00711">
    <property type="entry name" value="Defensin_beta"/>
    <property type="match status" value="1"/>
</dbReference>
<dbReference type="SUPFAM" id="SSF57392">
    <property type="entry name" value="Defensin-like"/>
    <property type="match status" value="1"/>
</dbReference>
<comment type="function">
    <text evidence="2">Has bactericidal activity. May act as a ligand for C-C chemokine receptor CCR6. Positively regulates the sperm motility and bactericidal activity in a CCR6-dependent manner. Binds to CCR6 and triggers Ca2+ mobilization in the sperm which is important for its motility.</text>
</comment>
<comment type="subunit">
    <text evidence="2">Monomer. Homodimer.</text>
</comment>
<comment type="subcellular location">
    <subcellularLocation>
        <location evidence="2">Secreted</location>
    </subcellularLocation>
    <subcellularLocation>
        <location evidence="2">Membrane</location>
    </subcellularLocation>
    <text evidence="2">Associates with tumor cell membrane-derived microvesicles.</text>
</comment>
<comment type="similarity">
    <text evidence="4">Belongs to the beta-defensin family.</text>
</comment>
<protein>
    <recommendedName>
        <fullName>Beta-defensin 1</fullName>
        <shortName>BD-1</shortName>
    </recommendedName>
    <alternativeName>
        <fullName>Defensin, beta 1</fullName>
    </alternativeName>
    <alternativeName>
        <fullName>RhBD-1</fullName>
    </alternativeName>
</protein>
<accession>O18794</accession>
<proteinExistence type="inferred from homology"/>
<name>DEFB1_MACMU</name>
<organism>
    <name type="scientific">Macaca mulatta</name>
    <name type="common">Rhesus macaque</name>
    <dbReference type="NCBI Taxonomy" id="9544"/>
    <lineage>
        <taxon>Eukaryota</taxon>
        <taxon>Metazoa</taxon>
        <taxon>Chordata</taxon>
        <taxon>Craniata</taxon>
        <taxon>Vertebrata</taxon>
        <taxon>Euteleostomi</taxon>
        <taxon>Mammalia</taxon>
        <taxon>Eutheria</taxon>
        <taxon>Euarchontoglires</taxon>
        <taxon>Primates</taxon>
        <taxon>Haplorrhini</taxon>
        <taxon>Catarrhini</taxon>
        <taxon>Cercopithecidae</taxon>
        <taxon>Cercopithecinae</taxon>
        <taxon>Macaca</taxon>
    </lineage>
</organism>
<evidence type="ECO:0000250" key="1"/>
<evidence type="ECO:0000250" key="2">
    <source>
        <dbReference type="UniProtKB" id="P60022"/>
    </source>
</evidence>
<evidence type="ECO:0000255" key="3"/>
<evidence type="ECO:0000305" key="4"/>
<sequence>MRTSYLLLFTLCLLLSEMASGDNFLTGLGHRSDHYNCVRSGGQCLYSACPIYTRIQGTCYHGKAKCCK</sequence>
<keyword id="KW-0044">Antibiotic</keyword>
<keyword id="KW-0929">Antimicrobial</keyword>
<keyword id="KW-0211">Defensin</keyword>
<keyword id="KW-1015">Disulfide bond</keyword>
<keyword id="KW-0472">Membrane</keyword>
<keyword id="KW-1185">Reference proteome</keyword>
<keyword id="KW-0964">Secreted</keyword>
<keyword id="KW-0732">Signal</keyword>
<reference key="1">
    <citation type="submission" date="1997-08" db="EMBL/GenBank/DDBJ databases">
        <authorList>
            <person name="Kwok J."/>
            <person name="Hurlock G."/>
            <person name="Wu X."/>
            <person name="Penland C."/>
            <person name="Wine J.J."/>
        </authorList>
    </citation>
    <scope>NUCLEOTIDE SEQUENCE [MRNA]</scope>
</reference>
<reference key="2">
    <citation type="journal article" date="2001" name="Clin. Diagn. Lab. Immunol.">
        <title>Rhesus monkey (Macaca mulatta) mucosal antimicrobial peptides are close homologues of human molecules.</title>
        <authorList>
            <person name="Bals R."/>
            <person name="Lang C."/>
            <person name="Weiner D.J."/>
            <person name="Vogelmeier C."/>
            <person name="Welsch U."/>
            <person name="Wilson J.M."/>
        </authorList>
    </citation>
    <scope>NUCLEOTIDE SEQUENCE [MRNA]</scope>
</reference>